<feature type="chain" id="PRO_0000133934" description="Enolase">
    <location>
        <begin position="1"/>
        <end position="428"/>
    </location>
</feature>
<feature type="active site" description="Proton donor" evidence="1">
    <location>
        <position position="205"/>
    </location>
</feature>
<feature type="active site" description="Proton acceptor" evidence="1">
    <location>
        <position position="337"/>
    </location>
</feature>
<feature type="binding site" evidence="1">
    <location>
        <position position="163"/>
    </location>
    <ligand>
        <name>(2R)-2-phosphoglycerate</name>
        <dbReference type="ChEBI" id="CHEBI:58289"/>
    </ligand>
</feature>
<feature type="binding site" evidence="1">
    <location>
        <position position="242"/>
    </location>
    <ligand>
        <name>Mg(2+)</name>
        <dbReference type="ChEBI" id="CHEBI:18420"/>
    </ligand>
</feature>
<feature type="binding site" evidence="1">
    <location>
        <position position="285"/>
    </location>
    <ligand>
        <name>Mg(2+)</name>
        <dbReference type="ChEBI" id="CHEBI:18420"/>
    </ligand>
</feature>
<feature type="binding site" evidence="1">
    <location>
        <position position="312"/>
    </location>
    <ligand>
        <name>Mg(2+)</name>
        <dbReference type="ChEBI" id="CHEBI:18420"/>
    </ligand>
</feature>
<feature type="binding site" evidence="1">
    <location>
        <position position="337"/>
    </location>
    <ligand>
        <name>(2R)-2-phosphoglycerate</name>
        <dbReference type="ChEBI" id="CHEBI:58289"/>
    </ligand>
</feature>
<feature type="binding site" evidence="1">
    <location>
        <position position="366"/>
    </location>
    <ligand>
        <name>(2R)-2-phosphoglycerate</name>
        <dbReference type="ChEBI" id="CHEBI:58289"/>
    </ligand>
</feature>
<feature type="binding site" evidence="1">
    <location>
        <position position="367"/>
    </location>
    <ligand>
        <name>(2R)-2-phosphoglycerate</name>
        <dbReference type="ChEBI" id="CHEBI:58289"/>
    </ligand>
</feature>
<feature type="binding site" evidence="1">
    <location>
        <position position="388"/>
    </location>
    <ligand>
        <name>(2R)-2-phosphoglycerate</name>
        <dbReference type="ChEBI" id="CHEBI:58289"/>
    </ligand>
</feature>
<comment type="function">
    <text evidence="1">Catalyzes the reversible conversion of 2-phosphoglycerate (2-PG) into phosphoenolpyruvate (PEP). It is essential for the degradation of carbohydrates via glycolysis.</text>
</comment>
<comment type="catalytic activity">
    <reaction evidence="1">
        <text>(2R)-2-phosphoglycerate = phosphoenolpyruvate + H2O</text>
        <dbReference type="Rhea" id="RHEA:10164"/>
        <dbReference type="ChEBI" id="CHEBI:15377"/>
        <dbReference type="ChEBI" id="CHEBI:58289"/>
        <dbReference type="ChEBI" id="CHEBI:58702"/>
        <dbReference type="EC" id="4.2.1.11"/>
    </reaction>
</comment>
<comment type="cofactor">
    <cofactor evidence="1">
        <name>Mg(2+)</name>
        <dbReference type="ChEBI" id="CHEBI:18420"/>
    </cofactor>
    <text evidence="1">Binds a second Mg(2+) ion via substrate during catalysis.</text>
</comment>
<comment type="pathway">
    <text evidence="1">Carbohydrate degradation; glycolysis; pyruvate from D-glyceraldehyde 3-phosphate: step 4/5.</text>
</comment>
<comment type="subcellular location">
    <subcellularLocation>
        <location evidence="1">Cytoplasm</location>
    </subcellularLocation>
    <subcellularLocation>
        <location evidence="1">Secreted</location>
    </subcellularLocation>
    <subcellularLocation>
        <location evidence="1">Cell surface</location>
    </subcellularLocation>
    <text evidence="1">Fractions of enolase are present in both the cytoplasm and on the cell surface.</text>
</comment>
<comment type="similarity">
    <text evidence="1">Belongs to the enolase family.</text>
</comment>
<accession>Q9JU46</accession>
<accession>A1IS92</accession>
<gene>
    <name evidence="1" type="primary">eno</name>
    <name type="ordered locus">NMA1495</name>
</gene>
<name>ENO_NEIMA</name>
<reference key="1">
    <citation type="journal article" date="2000" name="Nature">
        <title>Complete DNA sequence of a serogroup A strain of Neisseria meningitidis Z2491.</title>
        <authorList>
            <person name="Parkhill J."/>
            <person name="Achtman M."/>
            <person name="James K.D."/>
            <person name="Bentley S.D."/>
            <person name="Churcher C.M."/>
            <person name="Klee S.R."/>
            <person name="Morelli G."/>
            <person name="Basham D."/>
            <person name="Brown D."/>
            <person name="Chillingworth T."/>
            <person name="Davies R.M."/>
            <person name="Davis P."/>
            <person name="Devlin K."/>
            <person name="Feltwell T."/>
            <person name="Hamlin N."/>
            <person name="Holroyd S."/>
            <person name="Jagels K."/>
            <person name="Leather S."/>
            <person name="Moule S."/>
            <person name="Mungall K.L."/>
            <person name="Quail M.A."/>
            <person name="Rajandream M.A."/>
            <person name="Rutherford K.M."/>
            <person name="Simmonds M."/>
            <person name="Skelton J."/>
            <person name="Whitehead S."/>
            <person name="Spratt B.G."/>
            <person name="Barrell B.G."/>
        </authorList>
    </citation>
    <scope>NUCLEOTIDE SEQUENCE [LARGE SCALE GENOMIC DNA]</scope>
    <source>
        <strain>DSM 15465 / Z2491</strain>
    </source>
</reference>
<sequence>MSAIVDIFAREILDSRGNPTVECDVLLESGVMGRAAVPSGASTGQKEALELRDGDKSRYSGKGVLKAVEHVNNQIAQALIGIDANEQSYIDQIMIELDGTENKGNLGANATLAVSMAVARAAAEDSGLPLYRYLGGAGPMSLPVPMMNVINGGEHANNSLNIQEFMIMPVGAKSFREALRCGAEIFHALKKLCDSKGFPTTVGDEGGFAPNLNSHKEALQLMVEATEAAGYKAGEDVLFALDCASSEFYKDGKYHLEAEGRSYTNAEFAEYLEGLVNEFPIISIEDGMDENDWEGWKLLTEKLGGKVQLVGDDLFVTNPKILAEGIEKGVANALLVKVNQIGTLSETLKAVDLAKRNRYASVMSHRSGETEDSTIADLAVATNCMQIKTGSLSRSDRMAKYNQLLRIEEELAEAADYPSKAAFYQLGK</sequence>
<organism>
    <name type="scientific">Neisseria meningitidis serogroup A / serotype 4A (strain DSM 15465 / Z2491)</name>
    <dbReference type="NCBI Taxonomy" id="122587"/>
    <lineage>
        <taxon>Bacteria</taxon>
        <taxon>Pseudomonadati</taxon>
        <taxon>Pseudomonadota</taxon>
        <taxon>Betaproteobacteria</taxon>
        <taxon>Neisseriales</taxon>
        <taxon>Neisseriaceae</taxon>
        <taxon>Neisseria</taxon>
    </lineage>
</organism>
<keyword id="KW-0963">Cytoplasm</keyword>
<keyword id="KW-0324">Glycolysis</keyword>
<keyword id="KW-0456">Lyase</keyword>
<keyword id="KW-0460">Magnesium</keyword>
<keyword id="KW-0479">Metal-binding</keyword>
<keyword id="KW-0964">Secreted</keyword>
<evidence type="ECO:0000255" key="1">
    <source>
        <dbReference type="HAMAP-Rule" id="MF_00318"/>
    </source>
</evidence>
<protein>
    <recommendedName>
        <fullName evidence="1">Enolase</fullName>
        <ecNumber evidence="1">4.2.1.11</ecNumber>
    </recommendedName>
    <alternativeName>
        <fullName evidence="1">2-phospho-D-glycerate hydro-lyase</fullName>
    </alternativeName>
    <alternativeName>
        <fullName evidence="1">2-phosphoglycerate dehydratase</fullName>
    </alternativeName>
</protein>
<proteinExistence type="inferred from homology"/>
<dbReference type="EC" id="4.2.1.11" evidence="1"/>
<dbReference type="EMBL" id="AL157959">
    <property type="protein sequence ID" value="CAM08647.1"/>
    <property type="molecule type" value="Genomic_DNA"/>
</dbReference>
<dbReference type="PIR" id="A81841">
    <property type="entry name" value="A81841"/>
</dbReference>
<dbReference type="RefSeq" id="WP_002219188.1">
    <property type="nucleotide sequence ID" value="NC_003116.1"/>
</dbReference>
<dbReference type="SMR" id="Q9JU46"/>
<dbReference type="EnsemblBacteria" id="CAM08647">
    <property type="protein sequence ID" value="CAM08647"/>
    <property type="gene ID" value="NMA1495"/>
</dbReference>
<dbReference type="GeneID" id="93385913"/>
<dbReference type="KEGG" id="nma:NMA1495"/>
<dbReference type="HOGENOM" id="CLU_031223_2_1_4"/>
<dbReference type="UniPathway" id="UPA00109">
    <property type="reaction ID" value="UER00187"/>
</dbReference>
<dbReference type="Proteomes" id="UP000000626">
    <property type="component" value="Chromosome"/>
</dbReference>
<dbReference type="GO" id="GO:0009986">
    <property type="term" value="C:cell surface"/>
    <property type="evidence" value="ECO:0007669"/>
    <property type="project" value="UniProtKB-SubCell"/>
</dbReference>
<dbReference type="GO" id="GO:0005576">
    <property type="term" value="C:extracellular region"/>
    <property type="evidence" value="ECO:0007669"/>
    <property type="project" value="UniProtKB-SubCell"/>
</dbReference>
<dbReference type="GO" id="GO:0000015">
    <property type="term" value="C:phosphopyruvate hydratase complex"/>
    <property type="evidence" value="ECO:0007669"/>
    <property type="project" value="InterPro"/>
</dbReference>
<dbReference type="GO" id="GO:0000287">
    <property type="term" value="F:magnesium ion binding"/>
    <property type="evidence" value="ECO:0007669"/>
    <property type="project" value="UniProtKB-UniRule"/>
</dbReference>
<dbReference type="GO" id="GO:0004634">
    <property type="term" value="F:phosphopyruvate hydratase activity"/>
    <property type="evidence" value="ECO:0007669"/>
    <property type="project" value="UniProtKB-UniRule"/>
</dbReference>
<dbReference type="GO" id="GO:0006096">
    <property type="term" value="P:glycolytic process"/>
    <property type="evidence" value="ECO:0007669"/>
    <property type="project" value="UniProtKB-UniRule"/>
</dbReference>
<dbReference type="CDD" id="cd03313">
    <property type="entry name" value="enolase"/>
    <property type="match status" value="1"/>
</dbReference>
<dbReference type="FunFam" id="3.20.20.120:FF:000001">
    <property type="entry name" value="Enolase"/>
    <property type="match status" value="1"/>
</dbReference>
<dbReference type="FunFam" id="3.30.390.10:FF:000001">
    <property type="entry name" value="Enolase"/>
    <property type="match status" value="1"/>
</dbReference>
<dbReference type="Gene3D" id="3.20.20.120">
    <property type="entry name" value="Enolase-like C-terminal domain"/>
    <property type="match status" value="1"/>
</dbReference>
<dbReference type="Gene3D" id="3.30.390.10">
    <property type="entry name" value="Enolase-like, N-terminal domain"/>
    <property type="match status" value="1"/>
</dbReference>
<dbReference type="HAMAP" id="MF_00318">
    <property type="entry name" value="Enolase"/>
    <property type="match status" value="1"/>
</dbReference>
<dbReference type="InterPro" id="IPR000941">
    <property type="entry name" value="Enolase"/>
</dbReference>
<dbReference type="InterPro" id="IPR036849">
    <property type="entry name" value="Enolase-like_C_sf"/>
</dbReference>
<dbReference type="InterPro" id="IPR029017">
    <property type="entry name" value="Enolase-like_N"/>
</dbReference>
<dbReference type="InterPro" id="IPR020810">
    <property type="entry name" value="Enolase_C"/>
</dbReference>
<dbReference type="InterPro" id="IPR020809">
    <property type="entry name" value="Enolase_CS"/>
</dbReference>
<dbReference type="InterPro" id="IPR020811">
    <property type="entry name" value="Enolase_N"/>
</dbReference>
<dbReference type="NCBIfam" id="TIGR01060">
    <property type="entry name" value="eno"/>
    <property type="match status" value="1"/>
</dbReference>
<dbReference type="PANTHER" id="PTHR11902">
    <property type="entry name" value="ENOLASE"/>
    <property type="match status" value="1"/>
</dbReference>
<dbReference type="PANTHER" id="PTHR11902:SF1">
    <property type="entry name" value="ENOLASE"/>
    <property type="match status" value="1"/>
</dbReference>
<dbReference type="Pfam" id="PF00113">
    <property type="entry name" value="Enolase_C"/>
    <property type="match status" value="1"/>
</dbReference>
<dbReference type="Pfam" id="PF03952">
    <property type="entry name" value="Enolase_N"/>
    <property type="match status" value="1"/>
</dbReference>
<dbReference type="PIRSF" id="PIRSF001400">
    <property type="entry name" value="Enolase"/>
    <property type="match status" value="1"/>
</dbReference>
<dbReference type="PRINTS" id="PR00148">
    <property type="entry name" value="ENOLASE"/>
</dbReference>
<dbReference type="SFLD" id="SFLDS00001">
    <property type="entry name" value="Enolase"/>
    <property type="match status" value="1"/>
</dbReference>
<dbReference type="SFLD" id="SFLDF00002">
    <property type="entry name" value="enolase"/>
    <property type="match status" value="1"/>
</dbReference>
<dbReference type="SMART" id="SM01192">
    <property type="entry name" value="Enolase_C"/>
    <property type="match status" value="1"/>
</dbReference>
<dbReference type="SMART" id="SM01193">
    <property type="entry name" value="Enolase_N"/>
    <property type="match status" value="1"/>
</dbReference>
<dbReference type="SUPFAM" id="SSF51604">
    <property type="entry name" value="Enolase C-terminal domain-like"/>
    <property type="match status" value="1"/>
</dbReference>
<dbReference type="SUPFAM" id="SSF54826">
    <property type="entry name" value="Enolase N-terminal domain-like"/>
    <property type="match status" value="1"/>
</dbReference>
<dbReference type="PROSITE" id="PS00164">
    <property type="entry name" value="ENOLASE"/>
    <property type="match status" value="1"/>
</dbReference>